<proteinExistence type="inferred from homology"/>
<accession>Q5H4Y5</accession>
<reference key="1">
    <citation type="journal article" date="2005" name="Nucleic Acids Res.">
        <title>The genome sequence of Xanthomonas oryzae pathovar oryzae KACC10331, the bacterial blight pathogen of rice.</title>
        <authorList>
            <person name="Lee B.-M."/>
            <person name="Park Y.-J."/>
            <person name="Park D.-S."/>
            <person name="Kang H.-W."/>
            <person name="Kim J.-G."/>
            <person name="Song E.-S."/>
            <person name="Park I.-C."/>
            <person name="Yoon U.-H."/>
            <person name="Hahn J.-H."/>
            <person name="Koo B.-S."/>
            <person name="Lee G.-B."/>
            <person name="Kim H."/>
            <person name="Park H.-S."/>
            <person name="Yoon K.-O."/>
            <person name="Kim J.-H."/>
            <person name="Jung C.-H."/>
            <person name="Koh N.-H."/>
            <person name="Seo J.-S."/>
            <person name="Go S.-J."/>
        </authorList>
    </citation>
    <scope>NUCLEOTIDE SEQUENCE [LARGE SCALE GENOMIC DNA]</scope>
    <source>
        <strain>KACC10331 / KXO85</strain>
    </source>
</reference>
<organism>
    <name type="scientific">Xanthomonas oryzae pv. oryzae (strain KACC10331 / KXO85)</name>
    <dbReference type="NCBI Taxonomy" id="291331"/>
    <lineage>
        <taxon>Bacteria</taxon>
        <taxon>Pseudomonadati</taxon>
        <taxon>Pseudomonadota</taxon>
        <taxon>Gammaproteobacteria</taxon>
        <taxon>Lysobacterales</taxon>
        <taxon>Lysobacteraceae</taxon>
        <taxon>Xanthomonas</taxon>
    </lineage>
</organism>
<sequence length="287" mass="31913">MAGGREIKTKIKSVQNTRKVTRALEMVSASKIRKAQERMKTSRPYAQAMKQVIGHLAQASTDFQHPFLIEREQVKRVGYIVISSDRGLAGGLNNNLFRKMLGEVRPWQGTGAEIDVVTIGQKASAFFRRIKVNMVGSVTHLGDSPQVEQLIGVIKVMIDAFIEGKVDRVYLVYNRFVNTMTQKASFDQLLPLPAAEHKVAHHDWDYLYEPDAASVLEHVMTRYIESLVYQAVLENVASEHAARMVAMKAASDNANKMIGTLQLVYNKARQAAITQEISEIVSGAAAV</sequence>
<dbReference type="EMBL" id="AE013598">
    <property type="protein sequence ID" value="AAW73985.1"/>
    <property type="molecule type" value="Genomic_DNA"/>
</dbReference>
<dbReference type="SMR" id="Q5H4Y5"/>
<dbReference type="STRING" id="291331.XOO0731"/>
<dbReference type="KEGG" id="xoo:XOO0731"/>
<dbReference type="HOGENOM" id="CLU_050669_0_1_6"/>
<dbReference type="Proteomes" id="UP000006735">
    <property type="component" value="Chromosome"/>
</dbReference>
<dbReference type="GO" id="GO:0005886">
    <property type="term" value="C:plasma membrane"/>
    <property type="evidence" value="ECO:0007669"/>
    <property type="project" value="UniProtKB-SubCell"/>
</dbReference>
<dbReference type="GO" id="GO:0045259">
    <property type="term" value="C:proton-transporting ATP synthase complex"/>
    <property type="evidence" value="ECO:0007669"/>
    <property type="project" value="UniProtKB-KW"/>
</dbReference>
<dbReference type="GO" id="GO:0005524">
    <property type="term" value="F:ATP binding"/>
    <property type="evidence" value="ECO:0007669"/>
    <property type="project" value="UniProtKB-UniRule"/>
</dbReference>
<dbReference type="GO" id="GO:0046933">
    <property type="term" value="F:proton-transporting ATP synthase activity, rotational mechanism"/>
    <property type="evidence" value="ECO:0007669"/>
    <property type="project" value="UniProtKB-UniRule"/>
</dbReference>
<dbReference type="GO" id="GO:0042777">
    <property type="term" value="P:proton motive force-driven plasma membrane ATP synthesis"/>
    <property type="evidence" value="ECO:0007669"/>
    <property type="project" value="UniProtKB-UniRule"/>
</dbReference>
<dbReference type="CDD" id="cd12151">
    <property type="entry name" value="F1-ATPase_gamma"/>
    <property type="match status" value="1"/>
</dbReference>
<dbReference type="FunFam" id="1.10.287.80:FF:000005">
    <property type="entry name" value="ATP synthase gamma chain"/>
    <property type="match status" value="1"/>
</dbReference>
<dbReference type="FunFam" id="3.40.1380.10:FF:000007">
    <property type="entry name" value="ATP synthase gamma chain"/>
    <property type="match status" value="1"/>
</dbReference>
<dbReference type="Gene3D" id="3.40.1380.10">
    <property type="match status" value="1"/>
</dbReference>
<dbReference type="Gene3D" id="1.10.287.80">
    <property type="entry name" value="ATP synthase, gamma subunit, helix hairpin domain"/>
    <property type="match status" value="1"/>
</dbReference>
<dbReference type="HAMAP" id="MF_00815">
    <property type="entry name" value="ATP_synth_gamma_bact"/>
    <property type="match status" value="1"/>
</dbReference>
<dbReference type="InterPro" id="IPR035968">
    <property type="entry name" value="ATP_synth_F1_ATPase_gsu"/>
</dbReference>
<dbReference type="InterPro" id="IPR000131">
    <property type="entry name" value="ATP_synth_F1_gsu"/>
</dbReference>
<dbReference type="InterPro" id="IPR023632">
    <property type="entry name" value="ATP_synth_F1_gsu_CS"/>
</dbReference>
<dbReference type="NCBIfam" id="TIGR01146">
    <property type="entry name" value="ATPsyn_F1gamma"/>
    <property type="match status" value="1"/>
</dbReference>
<dbReference type="NCBIfam" id="NF004144">
    <property type="entry name" value="PRK05621.1-1"/>
    <property type="match status" value="1"/>
</dbReference>
<dbReference type="PANTHER" id="PTHR11693">
    <property type="entry name" value="ATP SYNTHASE GAMMA CHAIN"/>
    <property type="match status" value="1"/>
</dbReference>
<dbReference type="PANTHER" id="PTHR11693:SF22">
    <property type="entry name" value="ATP SYNTHASE SUBUNIT GAMMA, MITOCHONDRIAL"/>
    <property type="match status" value="1"/>
</dbReference>
<dbReference type="Pfam" id="PF00231">
    <property type="entry name" value="ATP-synt"/>
    <property type="match status" value="1"/>
</dbReference>
<dbReference type="PRINTS" id="PR00126">
    <property type="entry name" value="ATPASEGAMMA"/>
</dbReference>
<dbReference type="SUPFAM" id="SSF52943">
    <property type="entry name" value="ATP synthase (F1-ATPase), gamma subunit"/>
    <property type="match status" value="1"/>
</dbReference>
<dbReference type="PROSITE" id="PS00153">
    <property type="entry name" value="ATPASE_GAMMA"/>
    <property type="match status" value="1"/>
</dbReference>
<name>ATPG_XANOR</name>
<comment type="function">
    <text evidence="1">Produces ATP from ADP in the presence of a proton gradient across the membrane. The gamma chain is believed to be important in regulating ATPase activity and the flow of protons through the CF(0) complex.</text>
</comment>
<comment type="subunit">
    <text evidence="1">F-type ATPases have 2 components, CF(1) - the catalytic core - and CF(0) - the membrane proton channel. CF(1) has five subunits: alpha(3), beta(3), gamma(1), delta(1), epsilon(1). CF(0) has three main subunits: a, b and c.</text>
</comment>
<comment type="subcellular location">
    <subcellularLocation>
        <location evidence="1">Cell inner membrane</location>
        <topology evidence="1">Peripheral membrane protein</topology>
    </subcellularLocation>
</comment>
<comment type="similarity">
    <text evidence="1">Belongs to the ATPase gamma chain family.</text>
</comment>
<gene>
    <name evidence="1" type="primary">atpG</name>
    <name type="ordered locus">XOO0731</name>
</gene>
<protein>
    <recommendedName>
        <fullName evidence="1">ATP synthase gamma chain</fullName>
    </recommendedName>
    <alternativeName>
        <fullName evidence="1">ATP synthase F1 sector gamma subunit</fullName>
    </alternativeName>
    <alternativeName>
        <fullName evidence="1">F-ATPase gamma subunit</fullName>
    </alternativeName>
</protein>
<keyword id="KW-0066">ATP synthesis</keyword>
<keyword id="KW-0997">Cell inner membrane</keyword>
<keyword id="KW-1003">Cell membrane</keyword>
<keyword id="KW-0139">CF(1)</keyword>
<keyword id="KW-0375">Hydrogen ion transport</keyword>
<keyword id="KW-0406">Ion transport</keyword>
<keyword id="KW-0472">Membrane</keyword>
<keyword id="KW-1185">Reference proteome</keyword>
<keyword id="KW-0813">Transport</keyword>
<evidence type="ECO:0000255" key="1">
    <source>
        <dbReference type="HAMAP-Rule" id="MF_00815"/>
    </source>
</evidence>
<feature type="chain" id="PRO_0000073423" description="ATP synthase gamma chain">
    <location>
        <begin position="1"/>
        <end position="287"/>
    </location>
</feature>